<organism>
    <name type="scientific">Candida dubliniensis (strain CD36 / ATCC MYA-646 / CBS 7987 / NCPF 3949 / NRRL Y-17841)</name>
    <name type="common">Yeast</name>
    <dbReference type="NCBI Taxonomy" id="573826"/>
    <lineage>
        <taxon>Eukaryota</taxon>
        <taxon>Fungi</taxon>
        <taxon>Dikarya</taxon>
        <taxon>Ascomycota</taxon>
        <taxon>Saccharomycotina</taxon>
        <taxon>Pichiomycetes</taxon>
        <taxon>Debaryomycetaceae</taxon>
        <taxon>Candida/Lodderomyces clade</taxon>
        <taxon>Candida</taxon>
    </lineage>
</organism>
<sequence length="551" mass="62956">MTDTPNSPSKNTTKSASSSTKVIDSLHSKIDQLTDELTALKQSHQELTKKHSITAKKNDSFVDQLANAKHENDMLSALLKRKERRILDLEDQFNELTSQNESLVLSNKNMKIRCDNLQSNSNANIAEFERLKISYDALIASQMEYKNHYQQELNNLQIAFDNYKLENTKRFEELQTSIVNNDKDIDTLLDSLTNKRKAMDNIYVNKNNKVLQLLGNLAHLAKLHGQDTKSQVEQNLNIIEQLLVKYPDLQEKILEKEKIEIDLTEIIAHSNDVLTNSSFDEDTTLINSPDLENNHNFNNHNTSGSATPNNNNHNNNSNSHSLQSKKRKNYKRNSLILKESPPIISENVPSSLPKKPQVNNNLINIPKSRSKFNTPPTTPRQTTPRQFTNHNNDFEITHQWSSNNNNNNNNNNNNHRRNNSVDSRSDNGHHPHRRNNSYDSRPDHGQQHRRQPSQQNNNYNNNNYNNNNNNNNNINNNSNGFVKRSGSVRNGNNYNNNNGNGNGNGNGNANNNANNHGNKSKRRSTYNNNNNNNNNSKRNSQLFDNNFALNV</sequence>
<accession>B9WJ48</accession>
<reference key="1">
    <citation type="journal article" date="2009" name="Genome Res.">
        <title>Comparative genomics of the fungal pathogens Candida dubliniensis and Candida albicans.</title>
        <authorList>
            <person name="Jackson A.P."/>
            <person name="Gamble J.A."/>
            <person name="Yeomans T."/>
            <person name="Moran G.P."/>
            <person name="Saunders D."/>
            <person name="Harris D."/>
            <person name="Aslett M."/>
            <person name="Barrell J.F."/>
            <person name="Butler G."/>
            <person name="Citiulo F."/>
            <person name="Coleman D.C."/>
            <person name="de Groot P.W.J."/>
            <person name="Goodwin T.J."/>
            <person name="Quail M.A."/>
            <person name="McQuillan J."/>
            <person name="Munro C.A."/>
            <person name="Pain A."/>
            <person name="Poulter R.T."/>
            <person name="Rajandream M.A."/>
            <person name="Renauld H."/>
            <person name="Spiering M.J."/>
            <person name="Tivey A."/>
            <person name="Gow N.A.R."/>
            <person name="Barrell B."/>
            <person name="Sullivan D.J."/>
            <person name="Berriman M."/>
        </authorList>
    </citation>
    <scope>NUCLEOTIDE SEQUENCE [LARGE SCALE GENOMIC DNA]</scope>
    <source>
        <strain>CD36 / ATCC MYA-646 / CBS 7987 / NCPF 3949 / NRRL Y-17841</strain>
    </source>
</reference>
<protein>
    <recommendedName>
        <fullName>SWI5-dependent HO expression protein 3</fullName>
    </recommendedName>
</protein>
<gene>
    <name type="primary">SHE3</name>
    <name type="ORF">CD36_63970</name>
</gene>
<feature type="chain" id="PRO_0000408929" description="SWI5-dependent HO expression protein 3">
    <location>
        <begin position="1"/>
        <end position="551"/>
    </location>
</feature>
<feature type="region of interest" description="Disordered" evidence="3">
    <location>
        <begin position="1"/>
        <end position="22"/>
    </location>
</feature>
<feature type="region of interest" description="Disordered" evidence="3">
    <location>
        <begin position="285"/>
        <end position="551"/>
    </location>
</feature>
<feature type="coiled-coil region" evidence="2">
    <location>
        <begin position="20"/>
        <end position="110"/>
    </location>
</feature>
<feature type="compositionally biased region" description="Low complexity" evidence="3">
    <location>
        <begin position="7"/>
        <end position="21"/>
    </location>
</feature>
<feature type="compositionally biased region" description="Low complexity" evidence="3">
    <location>
        <begin position="309"/>
        <end position="321"/>
    </location>
</feature>
<feature type="compositionally biased region" description="Low complexity" evidence="3">
    <location>
        <begin position="372"/>
        <end position="389"/>
    </location>
</feature>
<feature type="compositionally biased region" description="Low complexity" evidence="3">
    <location>
        <begin position="401"/>
        <end position="413"/>
    </location>
</feature>
<feature type="compositionally biased region" description="Low complexity" evidence="3">
    <location>
        <begin position="456"/>
        <end position="479"/>
    </location>
</feature>
<feature type="compositionally biased region" description="Low complexity" evidence="3">
    <location>
        <begin position="490"/>
        <end position="499"/>
    </location>
</feature>
<feature type="compositionally biased region" description="Low complexity" evidence="3">
    <location>
        <begin position="507"/>
        <end position="517"/>
    </location>
</feature>
<feature type="compositionally biased region" description="Low complexity" evidence="3">
    <location>
        <begin position="525"/>
        <end position="540"/>
    </location>
</feature>
<feature type="compositionally biased region" description="Polar residues" evidence="3">
    <location>
        <begin position="541"/>
        <end position="551"/>
    </location>
</feature>
<evidence type="ECO:0000250" key="1"/>
<evidence type="ECO:0000255" key="2"/>
<evidence type="ECO:0000256" key="3">
    <source>
        <dbReference type="SAM" id="MobiDB-lite"/>
    </source>
</evidence>
<evidence type="ECO:0000305" key="4"/>
<name>SHE3_CANDC</name>
<dbReference type="EMBL" id="FM992693">
    <property type="protein sequence ID" value="CAX41269.1"/>
    <property type="molecule type" value="Genomic_DNA"/>
</dbReference>
<dbReference type="RefSeq" id="XP_002421110.1">
    <property type="nucleotide sequence ID" value="XM_002421065.1"/>
</dbReference>
<dbReference type="SMR" id="B9WJ48"/>
<dbReference type="GeneID" id="8048891"/>
<dbReference type="KEGG" id="cdu:CD36_63970"/>
<dbReference type="CGD" id="CAL0000162424">
    <property type="gene designation" value="Cd36_63970"/>
</dbReference>
<dbReference type="VEuPathDB" id="FungiDB:CD36_63970"/>
<dbReference type="eggNOG" id="ENOG502QSQX">
    <property type="taxonomic scope" value="Eukaryota"/>
</dbReference>
<dbReference type="HOGENOM" id="CLU_042310_0_0_1"/>
<dbReference type="OrthoDB" id="6088208at2759"/>
<dbReference type="Proteomes" id="UP000002605">
    <property type="component" value="Chromosome 6"/>
</dbReference>
<dbReference type="GO" id="GO:0005789">
    <property type="term" value="C:endoplasmic reticulum membrane"/>
    <property type="evidence" value="ECO:0007669"/>
    <property type="project" value="UniProtKB-SubCell"/>
</dbReference>
<dbReference type="GO" id="GO:0003723">
    <property type="term" value="F:RNA binding"/>
    <property type="evidence" value="ECO:0007669"/>
    <property type="project" value="UniProtKB-KW"/>
</dbReference>
<dbReference type="GO" id="GO:0048309">
    <property type="term" value="P:endoplasmic reticulum inheritance"/>
    <property type="evidence" value="ECO:0007669"/>
    <property type="project" value="InterPro"/>
</dbReference>
<dbReference type="GO" id="GO:0051028">
    <property type="term" value="P:mRNA transport"/>
    <property type="evidence" value="ECO:0007669"/>
    <property type="project" value="UniProtKB-KW"/>
</dbReference>
<dbReference type="InterPro" id="IPR031398">
    <property type="entry name" value="She3"/>
</dbReference>
<dbReference type="Pfam" id="PF17078">
    <property type="entry name" value="SHE3"/>
    <property type="match status" value="1"/>
</dbReference>
<dbReference type="SUPFAM" id="SSF90257">
    <property type="entry name" value="Myosin rod fragments"/>
    <property type="match status" value="1"/>
</dbReference>
<comment type="function">
    <text evidence="1">RNA-binding protein that binds specific mRNAs including the ASH1 mRNA, coding for a repressor of the HO endonuclease. Part of the mRNA localization machinery that restricts accumulation of certain proteins to the bud and in the daughter cell. Required for the delivery of cortical endoplasmic reticulum into the emerging bud (By similarity).</text>
</comment>
<comment type="subcellular location">
    <subcellularLocation>
        <location evidence="1">Endoplasmic reticulum membrane</location>
        <topology evidence="1">Peripheral membrane protein</topology>
    </subcellularLocation>
</comment>
<comment type="similarity">
    <text evidence="4">Belongs to the SHE3 family.</text>
</comment>
<keyword id="KW-0175">Coiled coil</keyword>
<keyword id="KW-0256">Endoplasmic reticulum</keyword>
<keyword id="KW-0472">Membrane</keyword>
<keyword id="KW-0509">mRNA transport</keyword>
<keyword id="KW-0694">RNA-binding</keyword>
<keyword id="KW-0813">Transport</keyword>
<proteinExistence type="inferred from homology"/>